<comment type="subunit">
    <text evidence="1 2">Interacts with NSP2 and NSP5.</text>
</comment>
<comment type="subcellular location">
    <subcellularLocation>
        <location evidence="1">Host cytoplasm</location>
    </subcellularLocation>
    <subcellularLocation>
        <location evidence="1 3">Host mitochondrion</location>
    </subcellularLocation>
    <text evidence="1">Found in spherical cytoplasmic structures, called viral factories, that appear early after infection and are the site of viral replication and packaging.</text>
</comment>
<comment type="similarity">
    <text evidence="1">Belongs to the rotavirus A NSP6 family.</text>
</comment>
<proteinExistence type="evidence at protein level"/>
<dbReference type="EMBL" id="X07831">
    <property type="protein sequence ID" value="CAA30684.1"/>
    <property type="molecule type" value="Genomic_RNA"/>
</dbReference>
<dbReference type="EMBL" id="M28347">
    <property type="protein sequence ID" value="AAA66882.1"/>
    <property type="molecule type" value="Genomic_RNA"/>
</dbReference>
<dbReference type="PIR" id="S01247">
    <property type="entry name" value="S01247"/>
</dbReference>
<dbReference type="Proteomes" id="UP000007180">
    <property type="component" value="Genome"/>
</dbReference>
<dbReference type="GO" id="GO:0033650">
    <property type="term" value="C:host cell mitochondrion"/>
    <property type="evidence" value="ECO:0007669"/>
    <property type="project" value="UniProtKB-SubCell"/>
</dbReference>
<dbReference type="HAMAP" id="MF_04093">
    <property type="entry name" value="ROTA_NSP6"/>
    <property type="match status" value="1"/>
</dbReference>
<dbReference type="InterPro" id="IPR006950">
    <property type="entry name" value="Rotavirus_NSP6"/>
</dbReference>
<dbReference type="Pfam" id="PF04866">
    <property type="entry name" value="Rota_NS6"/>
    <property type="match status" value="1"/>
</dbReference>
<accession>P11203</accession>
<organism>
    <name type="scientific">Rotavirus A (strain RVA/SA11-Both/G3P5B[2])</name>
    <name type="common">RV-A</name>
    <name type="synonym">Simian Agent 11 (strain Both)</name>
    <dbReference type="NCBI Taxonomy" id="37137"/>
    <lineage>
        <taxon>Viruses</taxon>
        <taxon>Riboviria</taxon>
        <taxon>Orthornavirae</taxon>
        <taxon>Duplornaviricota</taxon>
        <taxon>Resentoviricetes</taxon>
        <taxon>Reovirales</taxon>
        <taxon>Sedoreoviridae</taxon>
        <taxon>Rotavirus</taxon>
        <taxon>Rotavirus A</taxon>
    </lineage>
</organism>
<reference key="1">
    <citation type="journal article" date="1988" name="Nucleic Acids Res.">
        <title>Simian rotavirus SA11 segment 11 contains overlapping reading frames.</title>
        <authorList>
            <person name="Mitchell D.B."/>
            <person name="Both G.W."/>
        </authorList>
    </citation>
    <scope>NUCLEOTIDE SEQUENCE [GENOMIC RNA]</scope>
</reference>
<reference key="2">
    <citation type="journal article" date="1989" name="J. Virol.">
        <title>Rotavirus SA11 genome segment 11 protein is a nonstructural phosphoprotein.</title>
        <authorList>
            <person name="Welch S.K."/>
            <person name="Crawford S.E."/>
            <person name="Estes M.K."/>
        </authorList>
    </citation>
    <scope>NUCLEOTIDE SEQUENCE [GENOMIC RNA]</scope>
</reference>
<reference key="3">
    <citation type="journal article" date="2000" name="J. Gen. Virol.">
        <title>The C-terminal domain of rotavirus NSP5 is essential for its multimerization, hyperphosphorylation and interaction with NSP6.</title>
        <authorList>
            <person name="Torres-Vega M.A."/>
            <person name="Gonzalez R.A."/>
            <person name="Duarte M."/>
            <person name="Poncet D."/>
            <person name="Lopez S."/>
            <person name="Arias C.F."/>
        </authorList>
    </citation>
    <scope>INTERACTION WITH NSP2 AND NSP5</scope>
</reference>
<reference key="4">
    <citation type="journal article" date="2015" name="J. Gen. Virol.">
        <title>Rotavirus NSP6 localizes to mitochondria via a predicted N-terminal a-helix.</title>
        <authorList>
            <person name="Holloway G."/>
            <person name="Johnson R.I."/>
            <person name="Kang Y."/>
            <person name="Dang V.T."/>
            <person name="Stojanovski D."/>
            <person name="Coulson B.S."/>
        </authorList>
    </citation>
    <scope>SUBCELLULAR LOCATION</scope>
</reference>
<evidence type="ECO:0000255" key="1">
    <source>
        <dbReference type="HAMAP-Rule" id="MF_04093"/>
    </source>
</evidence>
<evidence type="ECO:0000269" key="2">
    <source>
    </source>
</evidence>
<evidence type="ECO:0000269" key="3">
    <source>
    </source>
</evidence>
<protein>
    <recommendedName>
        <fullName evidence="1">Non-structural protein 6</fullName>
        <shortName evidence="1">NSP6</shortName>
    </recommendedName>
</protein>
<keyword id="KW-1035">Host cytoplasm</keyword>
<keyword id="KW-1045">Host mitochondrion</keyword>
<keyword id="KW-1185">Reference proteome</keyword>
<name>NSP6_ROTS1</name>
<sequence>MNRLQQRQLFLENLLVGVNSTFHQMQKHSINTCCRSLQRILDHLILLQTIHSPVFRLDRMQLRQMQTLACLWIHQHNHDLQVMSDAIKWISP</sequence>
<feature type="chain" id="PRO_0000149646" description="Non-structural protein 6">
    <location>
        <begin position="1"/>
        <end position="92"/>
    </location>
</feature>
<organismHost>
    <name type="scientific">Macaca mulatta</name>
    <name type="common">Rhesus macaque</name>
    <dbReference type="NCBI Taxonomy" id="9544"/>
</organismHost>